<evidence type="ECO:0000255" key="1">
    <source>
        <dbReference type="HAMAP-Rule" id="MF_00137"/>
    </source>
</evidence>
<proteinExistence type="inferred from homology"/>
<gene>
    <name evidence="1" type="primary">purC</name>
    <name type="ordered locus">Emin_0514</name>
</gene>
<feature type="chain" id="PRO_1000122916" description="Phosphoribosylaminoimidazole-succinocarboxamide synthase">
    <location>
        <begin position="1"/>
        <end position="292"/>
    </location>
</feature>
<reference key="1">
    <citation type="journal article" date="2009" name="Appl. Environ. Microbiol.">
        <title>Genomic analysis of 'Elusimicrobium minutum,' the first cultivated representative of the phylum 'Elusimicrobia' (formerly termite group 1).</title>
        <authorList>
            <person name="Herlemann D.P.R."/>
            <person name="Geissinger O."/>
            <person name="Ikeda-Ohtsubo W."/>
            <person name="Kunin V."/>
            <person name="Sun H."/>
            <person name="Lapidus A."/>
            <person name="Hugenholtz P."/>
            <person name="Brune A."/>
        </authorList>
    </citation>
    <scope>NUCLEOTIDE SEQUENCE [LARGE SCALE GENOMIC DNA]</scope>
    <source>
        <strain>Pei191</strain>
    </source>
</reference>
<organism>
    <name type="scientific">Elusimicrobium minutum (strain Pei191)</name>
    <dbReference type="NCBI Taxonomy" id="445932"/>
    <lineage>
        <taxon>Bacteria</taxon>
        <taxon>Pseudomonadati</taxon>
        <taxon>Elusimicrobiota</taxon>
        <taxon>Elusimicrobia</taxon>
        <taxon>Elusimicrobiales</taxon>
        <taxon>Elusimicrobiaceae</taxon>
        <taxon>Elusimicrobium</taxon>
    </lineage>
</organism>
<dbReference type="EC" id="6.3.2.6" evidence="1"/>
<dbReference type="EMBL" id="CP001055">
    <property type="protein sequence ID" value="ACC98070.1"/>
    <property type="molecule type" value="Genomic_DNA"/>
</dbReference>
<dbReference type="RefSeq" id="WP_012414685.1">
    <property type="nucleotide sequence ID" value="NC_010644.1"/>
</dbReference>
<dbReference type="SMR" id="B2KCE9"/>
<dbReference type="STRING" id="445932.Emin_0514"/>
<dbReference type="KEGG" id="emi:Emin_0514"/>
<dbReference type="HOGENOM" id="CLU_045637_0_2_0"/>
<dbReference type="OrthoDB" id="9801549at2"/>
<dbReference type="UniPathway" id="UPA00074">
    <property type="reaction ID" value="UER00131"/>
</dbReference>
<dbReference type="Proteomes" id="UP000001029">
    <property type="component" value="Chromosome"/>
</dbReference>
<dbReference type="GO" id="GO:0005737">
    <property type="term" value="C:cytoplasm"/>
    <property type="evidence" value="ECO:0007669"/>
    <property type="project" value="TreeGrafter"/>
</dbReference>
<dbReference type="GO" id="GO:0005524">
    <property type="term" value="F:ATP binding"/>
    <property type="evidence" value="ECO:0007669"/>
    <property type="project" value="UniProtKB-KW"/>
</dbReference>
<dbReference type="GO" id="GO:0004639">
    <property type="term" value="F:phosphoribosylaminoimidazolesuccinocarboxamide synthase activity"/>
    <property type="evidence" value="ECO:0007669"/>
    <property type="project" value="UniProtKB-UniRule"/>
</dbReference>
<dbReference type="GO" id="GO:0006189">
    <property type="term" value="P:'de novo' IMP biosynthetic process"/>
    <property type="evidence" value="ECO:0007669"/>
    <property type="project" value="UniProtKB-UniRule"/>
</dbReference>
<dbReference type="CDD" id="cd01414">
    <property type="entry name" value="SAICAR_synt_Sc"/>
    <property type="match status" value="1"/>
</dbReference>
<dbReference type="FunFam" id="3.30.470.20:FF:000015">
    <property type="entry name" value="Phosphoribosylaminoimidazole-succinocarboxamide synthase"/>
    <property type="match status" value="1"/>
</dbReference>
<dbReference type="Gene3D" id="3.30.470.20">
    <property type="entry name" value="ATP-grasp fold, B domain"/>
    <property type="match status" value="1"/>
</dbReference>
<dbReference type="Gene3D" id="3.30.200.20">
    <property type="entry name" value="Phosphorylase Kinase, domain 1"/>
    <property type="match status" value="1"/>
</dbReference>
<dbReference type="HAMAP" id="MF_00137">
    <property type="entry name" value="SAICAR_synth"/>
    <property type="match status" value="1"/>
</dbReference>
<dbReference type="InterPro" id="IPR028923">
    <property type="entry name" value="SAICAR_synt/ADE2_N"/>
</dbReference>
<dbReference type="InterPro" id="IPR001636">
    <property type="entry name" value="SAICAR_synth"/>
</dbReference>
<dbReference type="InterPro" id="IPR018236">
    <property type="entry name" value="SAICAR_synthetase_CS"/>
</dbReference>
<dbReference type="NCBIfam" id="NF010568">
    <property type="entry name" value="PRK13961.1"/>
    <property type="match status" value="1"/>
</dbReference>
<dbReference type="NCBIfam" id="TIGR00081">
    <property type="entry name" value="purC"/>
    <property type="match status" value="1"/>
</dbReference>
<dbReference type="PANTHER" id="PTHR43700">
    <property type="entry name" value="PHOSPHORIBOSYLAMINOIMIDAZOLE-SUCCINOCARBOXAMIDE SYNTHASE"/>
    <property type="match status" value="1"/>
</dbReference>
<dbReference type="PANTHER" id="PTHR43700:SF1">
    <property type="entry name" value="PHOSPHORIBOSYLAMINOIMIDAZOLE-SUCCINOCARBOXAMIDE SYNTHASE"/>
    <property type="match status" value="1"/>
</dbReference>
<dbReference type="Pfam" id="PF01259">
    <property type="entry name" value="SAICAR_synt"/>
    <property type="match status" value="1"/>
</dbReference>
<dbReference type="SUPFAM" id="SSF56104">
    <property type="entry name" value="SAICAR synthase-like"/>
    <property type="match status" value="1"/>
</dbReference>
<dbReference type="PROSITE" id="PS01058">
    <property type="entry name" value="SAICAR_SYNTHETASE_2"/>
    <property type="match status" value="1"/>
</dbReference>
<keyword id="KW-0067">ATP-binding</keyword>
<keyword id="KW-0436">Ligase</keyword>
<keyword id="KW-0547">Nucleotide-binding</keyword>
<keyword id="KW-0658">Purine biosynthesis</keyword>
<keyword id="KW-1185">Reference proteome</keyword>
<protein>
    <recommendedName>
        <fullName evidence="1">Phosphoribosylaminoimidazole-succinocarboxamide synthase</fullName>
        <ecNumber evidence="1">6.3.2.6</ecNumber>
    </recommendedName>
    <alternativeName>
        <fullName evidence="1">SAICAR synthetase</fullName>
    </alternativeName>
</protein>
<name>PUR7_ELUMP</name>
<sequence length="292" mass="32826">MNNSQINLPLLKKGKVRDVYDAGKMLLIVASDRVSVFDCVLPSQIPDKGKILTQISNFWFAKTISIVPNHMISSDINEINIILKLGLDPQYYSGRTVLVKKCERIDFECVVRGYITGSAWKEYQKSGTVCGEKIKEGLKEAQKFPEPIFTPASKADTGHDENVSFAYMLSHMDKNLAYKIKDTSIKLYNFAEEYLKNCGIILADTKFEFGLIDGDLILIDEILTPDSSRFWDAALYKTGTNPPGFDKQFVRDYMEQTGWDKNPPPPAMPQSIALAAAKKYKEALSRIEKGSV</sequence>
<comment type="catalytic activity">
    <reaction evidence="1">
        <text>5-amino-1-(5-phospho-D-ribosyl)imidazole-4-carboxylate + L-aspartate + ATP = (2S)-2-[5-amino-1-(5-phospho-beta-D-ribosyl)imidazole-4-carboxamido]succinate + ADP + phosphate + 2 H(+)</text>
        <dbReference type="Rhea" id="RHEA:22628"/>
        <dbReference type="ChEBI" id="CHEBI:15378"/>
        <dbReference type="ChEBI" id="CHEBI:29991"/>
        <dbReference type="ChEBI" id="CHEBI:30616"/>
        <dbReference type="ChEBI" id="CHEBI:43474"/>
        <dbReference type="ChEBI" id="CHEBI:58443"/>
        <dbReference type="ChEBI" id="CHEBI:77657"/>
        <dbReference type="ChEBI" id="CHEBI:456216"/>
        <dbReference type="EC" id="6.3.2.6"/>
    </reaction>
</comment>
<comment type="pathway">
    <text evidence="1">Purine metabolism; IMP biosynthesis via de novo pathway; 5-amino-1-(5-phospho-D-ribosyl)imidazole-4-carboxamide from 5-amino-1-(5-phospho-D-ribosyl)imidazole-4-carboxylate: step 1/2.</text>
</comment>
<comment type="similarity">
    <text evidence="1">Belongs to the SAICAR synthetase family.</text>
</comment>
<accession>B2KCE9</accession>